<name>NADD_MYCGI</name>
<accession>A4T2H9</accession>
<proteinExistence type="inferred from homology"/>
<gene>
    <name evidence="1" type="primary">nadD</name>
    <name type="ordered locus">Mflv_2653</name>
</gene>
<keyword id="KW-0067">ATP-binding</keyword>
<keyword id="KW-0520">NAD</keyword>
<keyword id="KW-0547">Nucleotide-binding</keyword>
<keyword id="KW-0548">Nucleotidyltransferase</keyword>
<keyword id="KW-0662">Pyridine nucleotide biosynthesis</keyword>
<keyword id="KW-0808">Transferase</keyword>
<sequence length="204" mass="22608">MGGTFDPIHNGHLVAASEVADLFDLHEVVFVPTGQPWQKRSRPVTPAEDRYLMTVIATASNPRFSVSRVDIDRGGATYTKDTLRDLRAQNPDADLYFITGADALASILSWQNWEEMFAIARFIGVSRPGYELDGKHISAAMAELPADALHLVEVPALAISSTDCRLRAEQSRPIWYLVPDGVVQYVAKRDLYRNQNPAGEGERP</sequence>
<organism>
    <name type="scientific">Mycolicibacterium gilvum (strain PYR-GCK)</name>
    <name type="common">Mycobacterium gilvum (strain PYR-GCK)</name>
    <dbReference type="NCBI Taxonomy" id="350054"/>
    <lineage>
        <taxon>Bacteria</taxon>
        <taxon>Bacillati</taxon>
        <taxon>Actinomycetota</taxon>
        <taxon>Actinomycetes</taxon>
        <taxon>Mycobacteriales</taxon>
        <taxon>Mycobacteriaceae</taxon>
        <taxon>Mycolicibacterium</taxon>
    </lineage>
</organism>
<dbReference type="EC" id="2.7.7.18" evidence="1"/>
<dbReference type="EMBL" id="CP000656">
    <property type="protein sequence ID" value="ABP45130.1"/>
    <property type="molecule type" value="Genomic_DNA"/>
</dbReference>
<dbReference type="SMR" id="A4T2H9"/>
<dbReference type="STRING" id="350054.Mflv_2653"/>
<dbReference type="KEGG" id="mgi:Mflv_2653"/>
<dbReference type="eggNOG" id="COG1057">
    <property type="taxonomic scope" value="Bacteria"/>
</dbReference>
<dbReference type="HOGENOM" id="CLU_069765_1_1_11"/>
<dbReference type="UniPathway" id="UPA00253">
    <property type="reaction ID" value="UER00332"/>
</dbReference>
<dbReference type="GO" id="GO:0005524">
    <property type="term" value="F:ATP binding"/>
    <property type="evidence" value="ECO:0007669"/>
    <property type="project" value="UniProtKB-KW"/>
</dbReference>
<dbReference type="GO" id="GO:0004515">
    <property type="term" value="F:nicotinate-nucleotide adenylyltransferase activity"/>
    <property type="evidence" value="ECO:0007669"/>
    <property type="project" value="UniProtKB-UniRule"/>
</dbReference>
<dbReference type="GO" id="GO:0009435">
    <property type="term" value="P:NAD biosynthetic process"/>
    <property type="evidence" value="ECO:0007669"/>
    <property type="project" value="UniProtKB-UniRule"/>
</dbReference>
<dbReference type="CDD" id="cd02165">
    <property type="entry name" value="NMNAT"/>
    <property type="match status" value="1"/>
</dbReference>
<dbReference type="FunFam" id="3.40.50.620:FF:000039">
    <property type="entry name" value="Probable nicotinate-nucleotide adenylyltransferase"/>
    <property type="match status" value="1"/>
</dbReference>
<dbReference type="Gene3D" id="3.40.50.620">
    <property type="entry name" value="HUPs"/>
    <property type="match status" value="1"/>
</dbReference>
<dbReference type="HAMAP" id="MF_00244">
    <property type="entry name" value="NaMN_adenylyltr"/>
    <property type="match status" value="1"/>
</dbReference>
<dbReference type="InterPro" id="IPR004821">
    <property type="entry name" value="Cyt_trans-like"/>
</dbReference>
<dbReference type="InterPro" id="IPR005248">
    <property type="entry name" value="NadD/NMNAT"/>
</dbReference>
<dbReference type="InterPro" id="IPR014729">
    <property type="entry name" value="Rossmann-like_a/b/a_fold"/>
</dbReference>
<dbReference type="NCBIfam" id="TIGR00125">
    <property type="entry name" value="cyt_tran_rel"/>
    <property type="match status" value="1"/>
</dbReference>
<dbReference type="NCBIfam" id="TIGR00482">
    <property type="entry name" value="nicotinate (nicotinamide) nucleotide adenylyltransferase"/>
    <property type="match status" value="1"/>
</dbReference>
<dbReference type="NCBIfam" id="NF000840">
    <property type="entry name" value="PRK00071.1-3"/>
    <property type="match status" value="1"/>
</dbReference>
<dbReference type="PANTHER" id="PTHR39321">
    <property type="entry name" value="NICOTINATE-NUCLEOTIDE ADENYLYLTRANSFERASE-RELATED"/>
    <property type="match status" value="1"/>
</dbReference>
<dbReference type="PANTHER" id="PTHR39321:SF3">
    <property type="entry name" value="PHOSPHOPANTETHEINE ADENYLYLTRANSFERASE"/>
    <property type="match status" value="1"/>
</dbReference>
<dbReference type="Pfam" id="PF01467">
    <property type="entry name" value="CTP_transf_like"/>
    <property type="match status" value="1"/>
</dbReference>
<dbReference type="SUPFAM" id="SSF52374">
    <property type="entry name" value="Nucleotidylyl transferase"/>
    <property type="match status" value="1"/>
</dbReference>
<protein>
    <recommendedName>
        <fullName evidence="1">Probable nicotinate-nucleotide adenylyltransferase</fullName>
        <ecNumber evidence="1">2.7.7.18</ecNumber>
    </recommendedName>
    <alternativeName>
        <fullName evidence="1">Deamido-NAD(+) diphosphorylase</fullName>
    </alternativeName>
    <alternativeName>
        <fullName evidence="1">Deamido-NAD(+) pyrophosphorylase</fullName>
    </alternativeName>
    <alternativeName>
        <fullName evidence="1">Nicotinate mononucleotide adenylyltransferase</fullName>
        <shortName evidence="1">NaMN adenylyltransferase</shortName>
    </alternativeName>
</protein>
<feature type="chain" id="PRO_1000078385" description="Probable nicotinate-nucleotide adenylyltransferase">
    <location>
        <begin position="1"/>
        <end position="204"/>
    </location>
</feature>
<reference key="1">
    <citation type="submission" date="2007-04" db="EMBL/GenBank/DDBJ databases">
        <title>Complete sequence of chromosome of Mycobacterium gilvum PYR-GCK.</title>
        <authorList>
            <consortium name="US DOE Joint Genome Institute"/>
            <person name="Copeland A."/>
            <person name="Lucas S."/>
            <person name="Lapidus A."/>
            <person name="Barry K."/>
            <person name="Detter J.C."/>
            <person name="Glavina del Rio T."/>
            <person name="Hammon N."/>
            <person name="Israni S."/>
            <person name="Dalin E."/>
            <person name="Tice H."/>
            <person name="Pitluck S."/>
            <person name="Chain P."/>
            <person name="Malfatti S."/>
            <person name="Shin M."/>
            <person name="Vergez L."/>
            <person name="Schmutz J."/>
            <person name="Larimer F."/>
            <person name="Land M."/>
            <person name="Hauser L."/>
            <person name="Kyrpides N."/>
            <person name="Mikhailova N."/>
            <person name="Miller C."/>
            <person name="Richardson P."/>
        </authorList>
    </citation>
    <scope>NUCLEOTIDE SEQUENCE [LARGE SCALE GENOMIC DNA]</scope>
    <source>
        <strain>PYR-GCK</strain>
    </source>
</reference>
<evidence type="ECO:0000255" key="1">
    <source>
        <dbReference type="HAMAP-Rule" id="MF_00244"/>
    </source>
</evidence>
<comment type="function">
    <text evidence="1">Catalyzes the reversible adenylation of nicotinate mononucleotide (NaMN) to nicotinic acid adenine dinucleotide (NaAD).</text>
</comment>
<comment type="catalytic activity">
    <reaction evidence="1">
        <text>nicotinate beta-D-ribonucleotide + ATP + H(+) = deamido-NAD(+) + diphosphate</text>
        <dbReference type="Rhea" id="RHEA:22860"/>
        <dbReference type="ChEBI" id="CHEBI:15378"/>
        <dbReference type="ChEBI" id="CHEBI:30616"/>
        <dbReference type="ChEBI" id="CHEBI:33019"/>
        <dbReference type="ChEBI" id="CHEBI:57502"/>
        <dbReference type="ChEBI" id="CHEBI:58437"/>
        <dbReference type="EC" id="2.7.7.18"/>
    </reaction>
</comment>
<comment type="pathway">
    <text evidence="1">Cofactor biosynthesis; NAD(+) biosynthesis; deamido-NAD(+) from nicotinate D-ribonucleotide: step 1/1.</text>
</comment>
<comment type="similarity">
    <text evidence="1">Belongs to the NadD family.</text>
</comment>